<evidence type="ECO:0000255" key="1">
    <source>
        <dbReference type="HAMAP-Rule" id="MF_03148"/>
    </source>
</evidence>
<sequence length="199" mass="21842">MAKTTAAITFVTGNAKKLQEVQQILGQGFPFELTNRKIDLPELQGEPEDISREKCRLAAAEVKGPVMVEDTSLCFNALHGLPGPYIKWFLDKTGHVGLNNLLAAYPDKSAYAQCIFAFTTGPGAEIQTFVGRTEGKIVPARGPTDFGWDPVFQPDGFEETYAEMDKTIKNSISHRGRSLSALCAYFDTHKAELEKQLAA</sequence>
<proteinExistence type="inferred from homology"/>
<comment type="function">
    <text evidence="1">Pyrophosphatase that hydrolyzes non-canonical purine nucleotides such as inosine triphosphate (ITP), deoxyinosine triphosphate (dITP) or xanthosine 5'-triphosphate (XTP) to their respective monophosphate derivatives. The enzyme does not distinguish between the deoxy- and ribose forms. Probably excludes non-canonical purines from RNA and DNA precursor pools, thus preventing their incorporation into RNA and DNA and avoiding chromosomal lesions.</text>
</comment>
<comment type="catalytic activity">
    <reaction evidence="1">
        <text>ITP + H2O = IMP + diphosphate + H(+)</text>
        <dbReference type="Rhea" id="RHEA:29399"/>
        <dbReference type="ChEBI" id="CHEBI:15377"/>
        <dbReference type="ChEBI" id="CHEBI:15378"/>
        <dbReference type="ChEBI" id="CHEBI:33019"/>
        <dbReference type="ChEBI" id="CHEBI:58053"/>
        <dbReference type="ChEBI" id="CHEBI:61402"/>
        <dbReference type="EC" id="3.6.1.66"/>
    </reaction>
    <physiologicalReaction direction="left-to-right" evidence="1">
        <dbReference type="Rhea" id="RHEA:29400"/>
    </physiologicalReaction>
</comment>
<comment type="catalytic activity">
    <reaction evidence="1">
        <text>dITP + H2O = dIMP + diphosphate + H(+)</text>
        <dbReference type="Rhea" id="RHEA:28342"/>
        <dbReference type="ChEBI" id="CHEBI:15377"/>
        <dbReference type="ChEBI" id="CHEBI:15378"/>
        <dbReference type="ChEBI" id="CHEBI:33019"/>
        <dbReference type="ChEBI" id="CHEBI:61194"/>
        <dbReference type="ChEBI" id="CHEBI:61382"/>
        <dbReference type="EC" id="3.6.1.66"/>
    </reaction>
    <physiologicalReaction direction="left-to-right" evidence="1">
        <dbReference type="Rhea" id="RHEA:28343"/>
    </physiologicalReaction>
</comment>
<comment type="catalytic activity">
    <reaction evidence="1">
        <text>XTP + H2O = XMP + diphosphate + H(+)</text>
        <dbReference type="Rhea" id="RHEA:28610"/>
        <dbReference type="ChEBI" id="CHEBI:15377"/>
        <dbReference type="ChEBI" id="CHEBI:15378"/>
        <dbReference type="ChEBI" id="CHEBI:33019"/>
        <dbReference type="ChEBI" id="CHEBI:57464"/>
        <dbReference type="ChEBI" id="CHEBI:61314"/>
        <dbReference type="EC" id="3.6.1.66"/>
    </reaction>
    <physiologicalReaction direction="left-to-right" evidence="1">
        <dbReference type="Rhea" id="RHEA:28611"/>
    </physiologicalReaction>
</comment>
<comment type="cofactor">
    <cofactor evidence="1">
        <name>Mg(2+)</name>
        <dbReference type="ChEBI" id="CHEBI:18420"/>
    </cofactor>
    <cofactor evidence="1">
        <name>Mn(2+)</name>
        <dbReference type="ChEBI" id="CHEBI:29035"/>
    </cofactor>
    <text evidence="1">Binds 1 divalent metal cation per subunit; can use either Mg(2+) or Mn(2+).</text>
</comment>
<comment type="subunit">
    <text evidence="1">Homodimer.</text>
</comment>
<comment type="subcellular location">
    <subcellularLocation>
        <location evidence="1">Cytoplasm</location>
    </subcellularLocation>
</comment>
<comment type="similarity">
    <text evidence="1">Belongs to the HAM1 NTPase family.</text>
</comment>
<protein>
    <recommendedName>
        <fullName evidence="1">Inosine triphosphate pyrophosphatase</fullName>
        <shortName evidence="1">ITPase</shortName>
        <shortName evidence="1">Inosine triphosphatase</shortName>
        <ecNumber evidence="1">3.6.1.66</ecNumber>
    </recommendedName>
    <alternativeName>
        <fullName evidence="1">Non-canonical purine NTP pyrophosphatase</fullName>
    </alternativeName>
    <alternativeName>
        <fullName evidence="1">Non-standard purine NTP pyrophosphatase</fullName>
    </alternativeName>
    <alternativeName>
        <fullName evidence="1">Nucleoside-triphosphate diphosphatase</fullName>
    </alternativeName>
    <alternativeName>
        <fullName evidence="1">Nucleoside-triphosphate pyrophosphatase</fullName>
        <shortName evidence="1">NTPase</shortName>
    </alternativeName>
    <alternativeName>
        <fullName evidence="1">XTP/dITP diphosphatase</fullName>
    </alternativeName>
</protein>
<feature type="chain" id="PRO_0000413154" description="Inosine triphosphate pyrophosphatase">
    <location>
        <begin position="1"/>
        <end position="199"/>
    </location>
</feature>
<feature type="binding site" evidence="1">
    <location>
        <begin position="12"/>
        <end position="17"/>
    </location>
    <ligand>
        <name>ITP</name>
        <dbReference type="ChEBI" id="CHEBI:61402"/>
    </ligand>
</feature>
<feature type="binding site" evidence="1">
    <location>
        <position position="42"/>
    </location>
    <ligand>
        <name>Mg(2+)</name>
        <dbReference type="ChEBI" id="CHEBI:18420"/>
    </ligand>
</feature>
<feature type="binding site" evidence="1">
    <location>
        <position position="54"/>
    </location>
    <ligand>
        <name>ITP</name>
        <dbReference type="ChEBI" id="CHEBI:61402"/>
    </ligand>
</feature>
<feature type="binding site" evidence="1">
    <location>
        <begin position="70"/>
        <end position="71"/>
    </location>
    <ligand>
        <name>ITP</name>
        <dbReference type="ChEBI" id="CHEBI:61402"/>
    </ligand>
</feature>
<feature type="binding site" evidence="1">
    <location>
        <position position="87"/>
    </location>
    <ligand>
        <name>ITP</name>
        <dbReference type="ChEBI" id="CHEBI:61402"/>
    </ligand>
</feature>
<feature type="binding site" evidence="1">
    <location>
        <begin position="146"/>
        <end position="149"/>
    </location>
    <ligand>
        <name>ITP</name>
        <dbReference type="ChEBI" id="CHEBI:61402"/>
    </ligand>
</feature>
<feature type="binding site" evidence="1">
    <location>
        <position position="169"/>
    </location>
    <ligand>
        <name>ITP</name>
        <dbReference type="ChEBI" id="CHEBI:61402"/>
    </ligand>
</feature>
<feature type="binding site" evidence="1">
    <location>
        <begin position="174"/>
        <end position="175"/>
    </location>
    <ligand>
        <name>ITP</name>
        <dbReference type="ChEBI" id="CHEBI:61402"/>
    </ligand>
</feature>
<gene>
    <name type="ORF">13033</name>
</gene>
<accession>A9VE54</accession>
<organism>
    <name type="scientific">Monosiga brevicollis</name>
    <name type="common">Choanoflagellate</name>
    <dbReference type="NCBI Taxonomy" id="81824"/>
    <lineage>
        <taxon>Eukaryota</taxon>
        <taxon>Choanoflagellata</taxon>
        <taxon>Craspedida</taxon>
        <taxon>Salpingoecidae</taxon>
        <taxon>Monosiga</taxon>
    </lineage>
</organism>
<reference key="1">
    <citation type="journal article" date="2008" name="Nature">
        <title>The genome of the choanoflagellate Monosiga brevicollis and the origin of metazoans.</title>
        <authorList>
            <consortium name="JGI Sequencing"/>
            <person name="King N."/>
            <person name="Westbrook M.J."/>
            <person name="Young S.L."/>
            <person name="Kuo A."/>
            <person name="Abedin M."/>
            <person name="Chapman J."/>
            <person name="Fairclough S."/>
            <person name="Hellsten U."/>
            <person name="Isogai Y."/>
            <person name="Letunic I."/>
            <person name="Marr M."/>
            <person name="Pincus D."/>
            <person name="Putnam N."/>
            <person name="Rokas A."/>
            <person name="Wright K.J."/>
            <person name="Zuzow R."/>
            <person name="Dirks W."/>
            <person name="Good M."/>
            <person name="Goodstein D."/>
            <person name="Lemons D."/>
            <person name="Li W."/>
            <person name="Lyons J.B."/>
            <person name="Morris A."/>
            <person name="Nichols S."/>
            <person name="Richter D.J."/>
            <person name="Salamov A."/>
            <person name="Bork P."/>
            <person name="Lim W.A."/>
            <person name="Manning G."/>
            <person name="Miller W.T."/>
            <person name="McGinnis W."/>
            <person name="Shapiro H."/>
            <person name="Tjian R."/>
            <person name="Grigoriev I.V."/>
            <person name="Rokhsar D."/>
        </authorList>
    </citation>
    <scope>NUCLEOTIDE SEQUENCE [LARGE SCALE GENOMIC DNA]</scope>
    <source>
        <strain>MX1 / ATCC 50154</strain>
    </source>
</reference>
<dbReference type="EC" id="3.6.1.66" evidence="1"/>
<dbReference type="EMBL" id="CH991594">
    <property type="protein sequence ID" value="EDQ84204.1"/>
    <property type="molecule type" value="Genomic_DNA"/>
</dbReference>
<dbReference type="RefSeq" id="XP_001750992.1">
    <property type="nucleotide sequence ID" value="XM_001750940.1"/>
</dbReference>
<dbReference type="SMR" id="A9VE54"/>
<dbReference type="FunCoup" id="A9VE54">
    <property type="interactions" value="1427"/>
</dbReference>
<dbReference type="STRING" id="81824.A9VE54"/>
<dbReference type="EnsemblProtists" id="EDQ84204">
    <property type="protein sequence ID" value="EDQ84204"/>
    <property type="gene ID" value="MONBRDRAFT_13033"/>
</dbReference>
<dbReference type="KEGG" id="mbr:MONBRDRAFT_13033"/>
<dbReference type="eggNOG" id="KOG3222">
    <property type="taxonomic scope" value="Eukaryota"/>
</dbReference>
<dbReference type="InParanoid" id="A9VE54"/>
<dbReference type="OMA" id="YDPIFQP"/>
<dbReference type="Proteomes" id="UP000001357">
    <property type="component" value="Unassembled WGS sequence"/>
</dbReference>
<dbReference type="GO" id="GO:0005737">
    <property type="term" value="C:cytoplasm"/>
    <property type="evidence" value="ECO:0000318"/>
    <property type="project" value="GO_Central"/>
</dbReference>
<dbReference type="GO" id="GO:0035870">
    <property type="term" value="F:dITP diphosphatase activity"/>
    <property type="evidence" value="ECO:0007669"/>
    <property type="project" value="RHEA"/>
</dbReference>
<dbReference type="GO" id="GO:0036220">
    <property type="term" value="F:ITP diphosphatase activity"/>
    <property type="evidence" value="ECO:0007669"/>
    <property type="project" value="RHEA"/>
</dbReference>
<dbReference type="GO" id="GO:0046872">
    <property type="term" value="F:metal ion binding"/>
    <property type="evidence" value="ECO:0007669"/>
    <property type="project" value="UniProtKB-KW"/>
</dbReference>
<dbReference type="GO" id="GO:0047429">
    <property type="term" value="F:nucleoside triphosphate diphosphatase activity"/>
    <property type="evidence" value="ECO:0000318"/>
    <property type="project" value="GO_Central"/>
</dbReference>
<dbReference type="GO" id="GO:0000166">
    <property type="term" value="F:nucleotide binding"/>
    <property type="evidence" value="ECO:0007669"/>
    <property type="project" value="UniProtKB-KW"/>
</dbReference>
<dbReference type="GO" id="GO:0036222">
    <property type="term" value="F:XTP diphosphatase activity"/>
    <property type="evidence" value="ECO:0007669"/>
    <property type="project" value="RHEA"/>
</dbReference>
<dbReference type="GO" id="GO:0009204">
    <property type="term" value="P:deoxyribonucleoside triphosphate catabolic process"/>
    <property type="evidence" value="ECO:0007669"/>
    <property type="project" value="UniProtKB-UniRule"/>
</dbReference>
<dbReference type="GO" id="GO:0009143">
    <property type="term" value="P:nucleoside triphosphate catabolic process"/>
    <property type="evidence" value="ECO:0000318"/>
    <property type="project" value="GO_Central"/>
</dbReference>
<dbReference type="GO" id="GO:0009117">
    <property type="term" value="P:nucleotide metabolic process"/>
    <property type="evidence" value="ECO:0007669"/>
    <property type="project" value="UniProtKB-KW"/>
</dbReference>
<dbReference type="CDD" id="cd00515">
    <property type="entry name" value="HAM1"/>
    <property type="match status" value="1"/>
</dbReference>
<dbReference type="FunFam" id="3.90.950.10:FF:000003">
    <property type="entry name" value="Inosine triphosphate pyrophosphatase"/>
    <property type="match status" value="1"/>
</dbReference>
<dbReference type="Gene3D" id="3.90.950.10">
    <property type="match status" value="1"/>
</dbReference>
<dbReference type="HAMAP" id="MF_03148">
    <property type="entry name" value="HAM1_NTPase"/>
    <property type="match status" value="1"/>
</dbReference>
<dbReference type="InterPro" id="IPR027502">
    <property type="entry name" value="ITPase"/>
</dbReference>
<dbReference type="InterPro" id="IPR029001">
    <property type="entry name" value="ITPase-like_fam"/>
</dbReference>
<dbReference type="InterPro" id="IPR002637">
    <property type="entry name" value="RdgB/HAM1"/>
</dbReference>
<dbReference type="PANTHER" id="PTHR11067:SF9">
    <property type="entry name" value="INOSINE TRIPHOSPHATE PYROPHOSPHATASE"/>
    <property type="match status" value="1"/>
</dbReference>
<dbReference type="PANTHER" id="PTHR11067">
    <property type="entry name" value="INOSINE TRIPHOSPHATE PYROPHOSPHATASE/HAM1 PROTEIN"/>
    <property type="match status" value="1"/>
</dbReference>
<dbReference type="Pfam" id="PF01725">
    <property type="entry name" value="Ham1p_like"/>
    <property type="match status" value="1"/>
</dbReference>
<dbReference type="SUPFAM" id="SSF52972">
    <property type="entry name" value="ITPase-like"/>
    <property type="match status" value="1"/>
</dbReference>
<name>ITPA_MONBE</name>
<keyword id="KW-0963">Cytoplasm</keyword>
<keyword id="KW-0378">Hydrolase</keyword>
<keyword id="KW-0460">Magnesium</keyword>
<keyword id="KW-0464">Manganese</keyword>
<keyword id="KW-0479">Metal-binding</keyword>
<keyword id="KW-0546">Nucleotide metabolism</keyword>
<keyword id="KW-0547">Nucleotide-binding</keyword>
<keyword id="KW-1185">Reference proteome</keyword>